<name>RF1_METJA</name>
<sequence>MASTDSKQLYLFKKMLKELKSKKGKGTELISLYIPAGRRISDVAQHLREEMSQASNIKSKSTRKNVQSAIEAILQRLKLLKEPLEKGVVIFAGMVPRSGPGTEKMETYVIEPPEPIKTYIYRCDSEFYLEPLEEFLEDKDAYGVILVDRNEATIALVKGRNINILKKLTSGVPGKFKAGGQSARRLERLIDLAAHEFLQRVGQKANEQFLPLLQEKKLRGILVGGPGHTKNEFVEGDYLHHELKKIVLDTFDLCYTEEFGIRELLEKAAPLLKDVELMKEREAVQRFLKELIKEDGGLACYGEKEVLEALMMGAVDTLIVSEELEKYKVKIACNNCDYLEEKTVNKLELIKLEEELKNAQCPKCGGALSIVEEKDYIEYLSELCEQSGAKLVTVSSETEEGAMILNAFKGIAAILRYKIHQ</sequence>
<organism>
    <name type="scientific">Methanocaldococcus jannaschii (strain ATCC 43067 / DSM 2661 / JAL-1 / JCM 10045 / NBRC 100440)</name>
    <name type="common">Methanococcus jannaschii</name>
    <dbReference type="NCBI Taxonomy" id="243232"/>
    <lineage>
        <taxon>Archaea</taxon>
        <taxon>Methanobacteriati</taxon>
        <taxon>Methanobacteriota</taxon>
        <taxon>Methanomada group</taxon>
        <taxon>Methanococci</taxon>
        <taxon>Methanococcales</taxon>
        <taxon>Methanocaldococcaceae</taxon>
        <taxon>Methanocaldococcus</taxon>
    </lineage>
</organism>
<evidence type="ECO:0000250" key="1"/>
<evidence type="ECO:0000269" key="2">
    <source>
    </source>
</evidence>
<evidence type="ECO:0000305" key="3"/>
<keyword id="KW-0963">Cytoplasm</keyword>
<keyword id="KW-0648">Protein biosynthesis</keyword>
<keyword id="KW-1185">Reference proteome</keyword>
<reference key="1">
    <citation type="journal article" date="1996" name="Science">
        <title>Complete genome sequence of the methanogenic archaeon, Methanococcus jannaschii.</title>
        <authorList>
            <person name="Bult C.J."/>
            <person name="White O."/>
            <person name="Olsen G.J."/>
            <person name="Zhou L."/>
            <person name="Fleischmann R.D."/>
            <person name="Sutton G.G."/>
            <person name="Blake J.A."/>
            <person name="FitzGerald L.M."/>
            <person name="Clayton R.A."/>
            <person name="Gocayne J.D."/>
            <person name="Kerlavage A.R."/>
            <person name="Dougherty B.A."/>
            <person name="Tomb J.-F."/>
            <person name="Adams M.D."/>
            <person name="Reich C.I."/>
            <person name="Overbeek R."/>
            <person name="Kirkness E.F."/>
            <person name="Weinstock K.G."/>
            <person name="Merrick J.M."/>
            <person name="Glodek A."/>
            <person name="Scott J.L."/>
            <person name="Geoghagen N.S.M."/>
            <person name="Weidman J.F."/>
            <person name="Fuhrmann J.L."/>
            <person name="Nguyen D."/>
            <person name="Utterback T.R."/>
            <person name="Kelley J.M."/>
            <person name="Peterson J.D."/>
            <person name="Sadow P.W."/>
            <person name="Hanna M.C."/>
            <person name="Cotton M.D."/>
            <person name="Roberts K.M."/>
            <person name="Hurst M.A."/>
            <person name="Kaine B.P."/>
            <person name="Borodovsky M."/>
            <person name="Klenk H.-P."/>
            <person name="Fraser C.M."/>
            <person name="Smith H.O."/>
            <person name="Woese C.R."/>
            <person name="Venter J.C."/>
        </authorList>
    </citation>
    <scope>NUCLEOTIDE SEQUENCE [LARGE SCALE GENOMIC DNA]</scope>
    <source>
        <strain>ATCC 43067 / DSM 2661 / JAL-1 / JCM 10045 / NBRC 100440</strain>
    </source>
</reference>
<reference key="2">
    <citation type="journal article" date="2000" name="FEBS Lett.">
        <title>Translation termination factor aRF1 from the archaeon Methanococcus jannaschii is active with eukaryotic ribosomes.</title>
        <authorList>
            <person name="Dontsova M."/>
            <person name="Frolova L."/>
            <person name="Vassilieva J."/>
            <person name="Piendl W."/>
            <person name="Kisselev L."/>
            <person name="Garber M."/>
        </authorList>
    </citation>
    <scope>FUNCTION</scope>
</reference>
<accession>Q58239</accession>
<protein>
    <recommendedName>
        <fullName>Peptide chain release factor subunit 1</fullName>
    </recommendedName>
    <alternativeName>
        <fullName>Translation termination factor aRF1</fullName>
    </alternativeName>
</protein>
<comment type="function">
    <text evidence="2">Directs the termination of nascent peptide synthesis (translation) in response to the termination codons UAA, UAG and UGA.</text>
</comment>
<comment type="subunit">
    <text evidence="1">Heterodimer of two subunits, one of which binds GTP.</text>
</comment>
<comment type="subcellular location">
    <subcellularLocation>
        <location evidence="3">Cytoplasm</location>
    </subcellularLocation>
</comment>
<comment type="similarity">
    <text evidence="3">Belongs to the eukaryotic release factor 1 family.</text>
</comment>
<comment type="sequence caution" evidence="3">
    <conflict type="erroneous initiation">
        <sequence resource="EMBL-CDS" id="AAB98828"/>
    </conflict>
</comment>
<proteinExistence type="inferred from homology"/>
<feature type="chain" id="PRO_0000143174" description="Peptide chain release factor subunit 1">
    <location>
        <begin position="1"/>
        <end position="421"/>
    </location>
</feature>
<dbReference type="EMBL" id="L77117">
    <property type="protein sequence ID" value="AAB98828.1"/>
    <property type="status" value="ALT_INIT"/>
    <property type="molecule type" value="Genomic_DNA"/>
</dbReference>
<dbReference type="PIR" id="E64403">
    <property type="entry name" value="E64403"/>
</dbReference>
<dbReference type="RefSeq" id="WP_244409515.1">
    <property type="nucleotide sequence ID" value="NC_000909.1"/>
</dbReference>
<dbReference type="SMR" id="Q58239"/>
<dbReference type="FunCoup" id="Q58239">
    <property type="interactions" value="239"/>
</dbReference>
<dbReference type="STRING" id="243232.MJ_0829"/>
<dbReference type="PaxDb" id="243232-MJ_0829"/>
<dbReference type="EnsemblBacteria" id="AAB98828">
    <property type="protein sequence ID" value="AAB98828"/>
    <property type="gene ID" value="MJ_0829"/>
</dbReference>
<dbReference type="GeneID" id="1451712"/>
<dbReference type="KEGG" id="mja:MJ_0829"/>
<dbReference type="eggNOG" id="arCOG01742">
    <property type="taxonomic scope" value="Archaea"/>
</dbReference>
<dbReference type="HOGENOM" id="CLU_035759_3_0_2"/>
<dbReference type="InParanoid" id="Q58239"/>
<dbReference type="PhylomeDB" id="Q58239"/>
<dbReference type="Proteomes" id="UP000000805">
    <property type="component" value="Chromosome"/>
</dbReference>
<dbReference type="GO" id="GO:0005829">
    <property type="term" value="C:cytosol"/>
    <property type="evidence" value="ECO:0000318"/>
    <property type="project" value="GO_Central"/>
</dbReference>
<dbReference type="GO" id="GO:0018444">
    <property type="term" value="C:translation release factor complex"/>
    <property type="evidence" value="ECO:0000318"/>
    <property type="project" value="GO_Central"/>
</dbReference>
<dbReference type="GO" id="GO:1990825">
    <property type="term" value="F:sequence-specific mRNA binding"/>
    <property type="evidence" value="ECO:0000318"/>
    <property type="project" value="GO_Central"/>
</dbReference>
<dbReference type="GO" id="GO:0016149">
    <property type="term" value="F:translation release factor activity, codon specific"/>
    <property type="evidence" value="ECO:0000318"/>
    <property type="project" value="GO_Central"/>
</dbReference>
<dbReference type="FunFam" id="3.30.1330.30:FF:000032">
    <property type="entry name" value="Eukaryotic peptide chain release factor subunit 1"/>
    <property type="match status" value="1"/>
</dbReference>
<dbReference type="FunFam" id="3.30.420.60:FF:000003">
    <property type="entry name" value="Peptide chain release factor subunit 1"/>
    <property type="match status" value="1"/>
</dbReference>
<dbReference type="FunFam" id="3.30.960.10:FF:000003">
    <property type="entry name" value="Peptide chain release factor subunit 1"/>
    <property type="match status" value="1"/>
</dbReference>
<dbReference type="Gene3D" id="3.30.1330.30">
    <property type="match status" value="1"/>
</dbReference>
<dbReference type="Gene3D" id="3.30.960.10">
    <property type="entry name" value="eRF1 domain 1"/>
    <property type="match status" value="1"/>
</dbReference>
<dbReference type="Gene3D" id="3.30.420.60">
    <property type="entry name" value="eRF1 domain 2"/>
    <property type="match status" value="1"/>
</dbReference>
<dbReference type="HAMAP" id="MF_00424">
    <property type="entry name" value="Rel_fact_arch_1"/>
    <property type="match status" value="1"/>
</dbReference>
<dbReference type="InterPro" id="IPR042226">
    <property type="entry name" value="eFR1_2_sf"/>
</dbReference>
<dbReference type="InterPro" id="IPR005140">
    <property type="entry name" value="eRF1_1_Pelota"/>
</dbReference>
<dbReference type="InterPro" id="IPR024049">
    <property type="entry name" value="eRF1_1_sf"/>
</dbReference>
<dbReference type="InterPro" id="IPR005141">
    <property type="entry name" value="eRF1_2"/>
</dbReference>
<dbReference type="InterPro" id="IPR005142">
    <property type="entry name" value="eRF1_3"/>
</dbReference>
<dbReference type="InterPro" id="IPR020918">
    <property type="entry name" value="Peptide_chain-rel_aRF1"/>
</dbReference>
<dbReference type="InterPro" id="IPR004403">
    <property type="entry name" value="Peptide_chain-rel_eRF1/aRF1"/>
</dbReference>
<dbReference type="InterPro" id="IPR029064">
    <property type="entry name" value="Ribosomal_eL30-like_sf"/>
</dbReference>
<dbReference type="NCBIfam" id="TIGR03676">
    <property type="entry name" value="aRF1_eRF1"/>
    <property type="match status" value="1"/>
</dbReference>
<dbReference type="PANTHER" id="PTHR10113">
    <property type="entry name" value="PEPTIDE CHAIN RELEASE FACTOR SUBUNIT 1"/>
    <property type="match status" value="1"/>
</dbReference>
<dbReference type="Pfam" id="PF03463">
    <property type="entry name" value="eRF1_1"/>
    <property type="match status" value="1"/>
</dbReference>
<dbReference type="Pfam" id="PF03464">
    <property type="entry name" value="eRF1_2"/>
    <property type="match status" value="1"/>
</dbReference>
<dbReference type="Pfam" id="PF03465">
    <property type="entry name" value="eRF1_3"/>
    <property type="match status" value="1"/>
</dbReference>
<dbReference type="SMART" id="SM01194">
    <property type="entry name" value="eRF1_1"/>
    <property type="match status" value="1"/>
</dbReference>
<dbReference type="SUPFAM" id="SSF55315">
    <property type="entry name" value="L30e-like"/>
    <property type="match status" value="1"/>
</dbReference>
<dbReference type="SUPFAM" id="SSF55481">
    <property type="entry name" value="N-terminal domain of eukaryotic peptide chain release factor subunit 1, ERF1"/>
    <property type="match status" value="1"/>
</dbReference>
<dbReference type="SUPFAM" id="SSF53137">
    <property type="entry name" value="Translational machinery components"/>
    <property type="match status" value="1"/>
</dbReference>
<gene>
    <name type="primary">prf1</name>
    <name type="ordered locus">MJ0829</name>
</gene>